<organism>
    <name type="scientific">Saccharomyces cerevisiae (strain VIN 13)</name>
    <name type="common">Baker's yeast</name>
    <dbReference type="NCBI Taxonomy" id="764099"/>
    <lineage>
        <taxon>Eukaryota</taxon>
        <taxon>Fungi</taxon>
        <taxon>Dikarya</taxon>
        <taxon>Ascomycota</taxon>
        <taxon>Saccharomycotina</taxon>
        <taxon>Saccharomycetes</taxon>
        <taxon>Saccharomycetales</taxon>
        <taxon>Saccharomycetaceae</taxon>
        <taxon>Saccharomyces</taxon>
    </lineage>
</organism>
<evidence type="ECO:0000250" key="1">
    <source>
        <dbReference type="UniProtKB" id="Q12367"/>
    </source>
</evidence>
<evidence type="ECO:0000250" key="2">
    <source>
        <dbReference type="UniProtKB" id="Q9H867"/>
    </source>
</evidence>
<evidence type="ECO:0000256" key="3">
    <source>
        <dbReference type="SAM" id="MobiDB-lite"/>
    </source>
</evidence>
<evidence type="ECO:0000305" key="4"/>
<sequence length="367" mass="41368">MAFKLWLLDEETIYEHVFERYTQLEGQSGKLAQDLGIQDRRGGVLEITFEPSGLEGGRKKKRVRRRNKASSVEEDQNVAVDSYHVSVGQSISSLHSSRDNGNSTTGYVLWSTTPFFINWLLYSTSAAPFRLGSQVEVTCGSSCEGHXLELPRLXDLTGADRGKRGILELGAGISGILPVILGNFVDTYVSTDQKGILNKLKDNIMENLSQLTRKRCISRSLRLELPTVEPVGDADITAASLPSKSTLHLEVAALDWEKINLQDKKTHSLHPELSLIGETCSSVYVIAMDVIYNEYLIDPFLKTLKQLKHWLQTTYNLQFHVLVGIHLRSQEVTTLFLEKAIIEYDFTVYDIVDQVIQESRFNFYLIT</sequence>
<protein>
    <recommendedName>
        <fullName evidence="1">Ribosomal lysine N-methyltransferase 5</fullName>
        <ecNumber evidence="1">2.1.1.-</ecNumber>
    </recommendedName>
</protein>
<proteinExistence type="inferred from homology"/>
<dbReference type="EC" id="2.1.1.-" evidence="1"/>
<dbReference type="EMBL" id="ADXC01000055">
    <property type="protein sequence ID" value="EGA77926.1"/>
    <property type="molecule type" value="Genomic_DNA"/>
</dbReference>
<dbReference type="HOGENOM" id="CLU_051532_0_0_1"/>
<dbReference type="OMA" id="ACDTIYN"/>
<dbReference type="OrthoDB" id="5600at4893"/>
<dbReference type="GO" id="GO:0005829">
    <property type="term" value="C:cytosol"/>
    <property type="evidence" value="ECO:0007669"/>
    <property type="project" value="TreeGrafter"/>
</dbReference>
<dbReference type="GO" id="GO:0032991">
    <property type="term" value="C:protein-containing complex"/>
    <property type="evidence" value="ECO:0007669"/>
    <property type="project" value="TreeGrafter"/>
</dbReference>
<dbReference type="GO" id="GO:0008757">
    <property type="term" value="F:S-adenosylmethionine-dependent methyltransferase activity"/>
    <property type="evidence" value="ECO:0007669"/>
    <property type="project" value="UniProtKB-ARBA"/>
</dbReference>
<dbReference type="GO" id="GO:0032259">
    <property type="term" value="P:methylation"/>
    <property type="evidence" value="ECO:0007669"/>
    <property type="project" value="UniProtKB-KW"/>
</dbReference>
<dbReference type="Gene3D" id="3.40.50.150">
    <property type="entry name" value="Vaccinia Virus protein VP39"/>
    <property type="match status" value="1"/>
</dbReference>
<dbReference type="InterPro" id="IPR019410">
    <property type="entry name" value="Methyltransf_16"/>
</dbReference>
<dbReference type="InterPro" id="IPR029063">
    <property type="entry name" value="SAM-dependent_MTases_sf"/>
</dbReference>
<dbReference type="PANTHER" id="PTHR14614">
    <property type="entry name" value="HEPATOCELLULAR CARCINOMA-ASSOCIATED ANTIGEN"/>
    <property type="match status" value="1"/>
</dbReference>
<dbReference type="PANTHER" id="PTHR14614:SF109">
    <property type="entry name" value="RIBOSOMAL LYSINE N-METHYLTRANSFERASE 5"/>
    <property type="match status" value="1"/>
</dbReference>
<name>RKM5_YEASV</name>
<reference key="1">
    <citation type="journal article" date="2011" name="PLoS Genet.">
        <title>Whole-genome comparison reveals novel genetic elements that characterize the genome of industrial strains of Saccharomyces cerevisiae.</title>
        <authorList>
            <person name="Borneman A.R."/>
            <person name="Desany B.A."/>
            <person name="Riches D."/>
            <person name="Affourtit J.P."/>
            <person name="Forgan A.H."/>
            <person name="Pretorius I.S."/>
            <person name="Egholm M."/>
            <person name="Chambers P.J."/>
        </authorList>
    </citation>
    <scope>NUCLEOTIDE SEQUENCE [LARGE SCALE GENOMIC DNA]</scope>
    <source>
        <strain>VIN 13</strain>
    </source>
</reference>
<accession>E7LXI9</accession>
<comment type="function">
    <text evidence="1">S-adenosyl-L-methionine-dependent protein-lysine N-methyltransferase that monomethylates 60S ribosomal protein L1 (RPL1A and RPL1B) at 'Lys-46'.</text>
</comment>
<comment type="similarity">
    <text evidence="4">Belongs to the class I-like SAM-binding methyltransferase superfamily. RKM5 family.</text>
</comment>
<keyword id="KW-0489">Methyltransferase</keyword>
<keyword id="KW-0949">S-adenosyl-L-methionine</keyword>
<keyword id="KW-0808">Transferase</keyword>
<feature type="chain" id="PRO_0000411051" description="Ribosomal lysine N-methyltransferase 5">
    <location>
        <begin position="1"/>
        <end position="367"/>
    </location>
</feature>
<feature type="region of interest" description="Disordered" evidence="3">
    <location>
        <begin position="55"/>
        <end position="74"/>
    </location>
</feature>
<feature type="compositionally biased region" description="Basic residues" evidence="3">
    <location>
        <begin position="58"/>
        <end position="68"/>
    </location>
</feature>
<feature type="binding site" evidence="2">
    <location>
        <position position="110"/>
    </location>
    <ligand>
        <name>S-adenosyl-L-methionine</name>
        <dbReference type="ChEBI" id="CHEBI:59789"/>
    </ligand>
</feature>
<feature type="binding site" evidence="2">
    <location>
        <begin position="170"/>
        <end position="172"/>
    </location>
    <ligand>
        <name>S-adenosyl-L-methionine</name>
        <dbReference type="ChEBI" id="CHEBI:59789"/>
    </ligand>
</feature>
<feature type="binding site" evidence="2">
    <location>
        <position position="192"/>
    </location>
    <ligand>
        <name>S-adenosyl-L-methionine</name>
        <dbReference type="ChEBI" id="CHEBI:59789"/>
    </ligand>
</feature>
<feature type="binding site" evidence="2">
    <location>
        <position position="256"/>
    </location>
    <ligand>
        <name>S-adenosyl-L-methionine</name>
        <dbReference type="ChEBI" id="CHEBI:59789"/>
    </ligand>
</feature>
<feature type="binding site" evidence="2">
    <location>
        <position position="288"/>
    </location>
    <ligand>
        <name>S-adenosyl-L-methionine</name>
        <dbReference type="ChEBI" id="CHEBI:59789"/>
    </ligand>
</feature>
<gene>
    <name type="primary">RKM5</name>
    <name type="ORF">VIN13_3206</name>
</gene>